<reference evidence="8" key="1">
    <citation type="submission" date="2003-01" db="EMBL/GenBank/DDBJ databases">
        <authorList>
            <consortium name="NIH - Xenopus Gene Collection (XGC) project"/>
        </authorList>
    </citation>
    <scope>NUCLEOTIDE SEQUENCE [LARGE SCALE MRNA]</scope>
    <source>
        <tissue evidence="8">Embryo</tissue>
    </source>
</reference>
<reference evidence="7" key="2">
    <citation type="journal article" date="2006" name="Dev. Biol.">
        <title>Tes regulates neural crest migration and axial elongation in Xenopus.</title>
        <authorList>
            <person name="Dingwell K.S."/>
            <person name="Smith J.C."/>
        </authorList>
    </citation>
    <scope>FUNCTION</scope>
    <scope>SUBCELLULAR LOCATION</scope>
    <scope>TISSUE SPECIFICITY</scope>
    <scope>DEVELOPMENTAL STAGE</scope>
</reference>
<dbReference type="EMBL" id="BC045027">
    <property type="protein sequence ID" value="AAH45027.1"/>
    <property type="molecule type" value="mRNA"/>
</dbReference>
<dbReference type="RefSeq" id="NP_001080706.1">
    <property type="nucleotide sequence ID" value="NM_001087237.1"/>
</dbReference>
<dbReference type="SMR" id="Q7ZXE9"/>
<dbReference type="DNASU" id="380398"/>
<dbReference type="AGR" id="Xenbase:XB-GENE-6253774"/>
<dbReference type="Xenbase" id="XB-GENE-6253774">
    <property type="gene designation" value="tes.L"/>
</dbReference>
<dbReference type="OMA" id="NFSCHQC"/>
<dbReference type="OrthoDB" id="10069167at2759"/>
<dbReference type="CD-CODE" id="78E86D56">
    <property type="entry name" value="Mitochondrial cloud"/>
</dbReference>
<dbReference type="Proteomes" id="UP000186698">
    <property type="component" value="Unplaced"/>
</dbReference>
<dbReference type="Bgee" id="380398">
    <property type="expression patterns" value="Expressed in lung and 18 other cell types or tissues"/>
</dbReference>
<dbReference type="GO" id="GO:0005938">
    <property type="term" value="C:cell cortex"/>
    <property type="evidence" value="ECO:0000314"/>
    <property type="project" value="UniProtKB"/>
</dbReference>
<dbReference type="GO" id="GO:0005737">
    <property type="term" value="C:cytoplasm"/>
    <property type="evidence" value="ECO:0000250"/>
    <property type="project" value="UniProtKB"/>
</dbReference>
<dbReference type="GO" id="GO:0005925">
    <property type="term" value="C:focal adhesion"/>
    <property type="evidence" value="ECO:0007669"/>
    <property type="project" value="UniProtKB-SubCell"/>
</dbReference>
<dbReference type="GO" id="GO:0008270">
    <property type="term" value="F:zinc ion binding"/>
    <property type="evidence" value="ECO:0000250"/>
    <property type="project" value="UniProtKB"/>
</dbReference>
<dbReference type="GO" id="GO:0001755">
    <property type="term" value="P:neural crest cell migration"/>
    <property type="evidence" value="ECO:0000315"/>
    <property type="project" value="UniProtKB"/>
</dbReference>
<dbReference type="CDD" id="cd09413">
    <property type="entry name" value="LIM1_Testin"/>
    <property type="match status" value="1"/>
</dbReference>
<dbReference type="CDD" id="cd09416">
    <property type="entry name" value="LIM2_Testin"/>
    <property type="match status" value="1"/>
</dbReference>
<dbReference type="CDD" id="cd09419">
    <property type="entry name" value="LIM3_Testin"/>
    <property type="match status" value="1"/>
</dbReference>
<dbReference type="CDD" id="cd09829">
    <property type="entry name" value="PET_testin"/>
    <property type="match status" value="1"/>
</dbReference>
<dbReference type="FunFam" id="2.10.110.10:FF:000061">
    <property type="entry name" value="Testin"/>
    <property type="match status" value="1"/>
</dbReference>
<dbReference type="FunFam" id="2.10.110.10:FF:000005">
    <property type="entry name" value="Testin isoform 1"/>
    <property type="match status" value="1"/>
</dbReference>
<dbReference type="Gene3D" id="2.10.110.10">
    <property type="entry name" value="Cysteine Rich Protein"/>
    <property type="match status" value="3"/>
</dbReference>
<dbReference type="InterPro" id="IPR034958">
    <property type="entry name" value="LIM1_Testin"/>
</dbReference>
<dbReference type="InterPro" id="IPR034959">
    <property type="entry name" value="LIM2_Testin"/>
</dbReference>
<dbReference type="InterPro" id="IPR034960">
    <property type="entry name" value="LIM3_Testin"/>
</dbReference>
<dbReference type="InterPro" id="IPR010442">
    <property type="entry name" value="PET_domain"/>
</dbReference>
<dbReference type="InterPro" id="IPR033724">
    <property type="entry name" value="PET_testin"/>
</dbReference>
<dbReference type="InterPro" id="IPR047120">
    <property type="entry name" value="Pk/Esn/Tes"/>
</dbReference>
<dbReference type="InterPro" id="IPR001781">
    <property type="entry name" value="Znf_LIM"/>
</dbReference>
<dbReference type="PANTHER" id="PTHR24211">
    <property type="entry name" value="LIM DOMAIN-CONTAINING PROTEIN"/>
    <property type="match status" value="1"/>
</dbReference>
<dbReference type="PANTHER" id="PTHR24211:SF1">
    <property type="entry name" value="TESTIN"/>
    <property type="match status" value="1"/>
</dbReference>
<dbReference type="Pfam" id="PF00412">
    <property type="entry name" value="LIM"/>
    <property type="match status" value="3"/>
</dbReference>
<dbReference type="Pfam" id="PF06297">
    <property type="entry name" value="PET"/>
    <property type="match status" value="1"/>
</dbReference>
<dbReference type="SMART" id="SM00132">
    <property type="entry name" value="LIM"/>
    <property type="match status" value="3"/>
</dbReference>
<dbReference type="SUPFAM" id="SSF57716">
    <property type="entry name" value="Glucocorticoid receptor-like (DNA-binding domain)"/>
    <property type="match status" value="2"/>
</dbReference>
<dbReference type="PROSITE" id="PS00478">
    <property type="entry name" value="LIM_DOMAIN_1"/>
    <property type="match status" value="2"/>
</dbReference>
<dbReference type="PROSITE" id="PS50023">
    <property type="entry name" value="LIM_DOMAIN_2"/>
    <property type="match status" value="3"/>
</dbReference>
<dbReference type="PROSITE" id="PS51303">
    <property type="entry name" value="PET"/>
    <property type="match status" value="1"/>
</dbReference>
<feature type="chain" id="PRO_0000283795" description="Testin">
    <location>
        <begin position="1"/>
        <end position="422"/>
    </location>
</feature>
<feature type="domain" description="PET" evidence="4">
    <location>
        <begin position="92"/>
        <end position="199"/>
    </location>
</feature>
<feature type="domain" description="LIM zinc-binding 1" evidence="3">
    <location>
        <begin position="234"/>
        <end position="299"/>
    </location>
</feature>
<feature type="domain" description="LIM zinc-binding 2" evidence="3">
    <location>
        <begin position="300"/>
        <end position="359"/>
    </location>
</feature>
<feature type="domain" description="LIM zinc-binding 3" evidence="3">
    <location>
        <begin position="360"/>
        <end position="422"/>
    </location>
</feature>
<feature type="region of interest" description="Disordered" evidence="5">
    <location>
        <begin position="135"/>
        <end position="165"/>
    </location>
</feature>
<feature type="compositionally biased region" description="Basic and acidic residues" evidence="5">
    <location>
        <begin position="155"/>
        <end position="165"/>
    </location>
</feature>
<evidence type="ECO:0000250" key="1"/>
<evidence type="ECO:0000250" key="2">
    <source>
        <dbReference type="UniProtKB" id="Q9UGI8"/>
    </source>
</evidence>
<evidence type="ECO:0000255" key="3">
    <source>
        <dbReference type="PROSITE-ProRule" id="PRU00125"/>
    </source>
</evidence>
<evidence type="ECO:0000255" key="4">
    <source>
        <dbReference type="PROSITE-ProRule" id="PRU00636"/>
    </source>
</evidence>
<evidence type="ECO:0000256" key="5">
    <source>
        <dbReference type="SAM" id="MobiDB-lite"/>
    </source>
</evidence>
<evidence type="ECO:0000269" key="6">
    <source>
    </source>
</evidence>
<evidence type="ECO:0000305" key="7"/>
<evidence type="ECO:0000312" key="8">
    <source>
        <dbReference type="EMBL" id="AAH45027.1"/>
    </source>
</evidence>
<keyword id="KW-0965">Cell junction</keyword>
<keyword id="KW-0963">Cytoplasm</keyword>
<keyword id="KW-0217">Developmental protein</keyword>
<keyword id="KW-0440">LIM domain</keyword>
<keyword id="KW-0479">Metal-binding</keyword>
<keyword id="KW-1185">Reference proteome</keyword>
<keyword id="KW-0677">Repeat</keyword>
<keyword id="KW-0862">Zinc</keyword>
<proteinExistence type="evidence at transcript level"/>
<sequence>MELENKFKKVTLGHEEGSGAPCLKCKEKCEGFELHFWRKICRNCKCGQEEHSVLSNNEDDRKVGKLFEDTKYTALIAKLKTDGIPTYKRNVMILTSPVAAKKDVSINTVTYEWAPPVQNQALARRYMELIPKDKQPVAGSEGAQYRKKQLAKQLPAHDQDPSKCHELSPNEVKQMEQFVKKYKNEVLGVGDVKLPKEVEAQASGAGRSTNGSLSTLTTVKSTDDKVAAQKGSTYYCFRCKENMREGDPAVYAERAGYDKLWHPSCFVCFTCNELLVDMIYFWKNGKLYCGRHYCDSEKPRCAGCDELIFSNEYTQAEGLNWHLKHFCCFDCDIVLAGEIYVMVNDKAVCKPCYVKNHAVSCQGCHNAIDPEVQRVSYNGFHWHAAPECFICSCCSKCLIGQKFMPIEGMVFCSVECKKKMSS</sequence>
<gene>
    <name evidence="2" type="primary">tes</name>
</gene>
<name>TES_XENLA</name>
<accession>Q7ZXE9</accession>
<protein>
    <recommendedName>
        <fullName>Testin</fullName>
    </recommendedName>
    <alternativeName>
        <fullName>Xtes</fullName>
    </alternativeName>
</protein>
<comment type="function">
    <text evidence="1 6">Scaffold protein that may play a role in cell adhesion, cell spreading and in the reorganization of the actin cytoskeleton. May inhibit cell growth (By similarity). Regulates cranial neural crest migration. Acts together with prickle1 to control axial elongation.</text>
</comment>
<comment type="subcellular location">
    <subcellularLocation>
        <location evidence="6">Cytoplasm</location>
        <location evidence="6">Cell cortex</location>
    </subcellularLocation>
    <subcellularLocation>
        <location evidence="1">Cell junction</location>
        <location evidence="1">Focal adhesion</location>
    </subcellularLocation>
    <text evidence="1">Detected along actin stress fibers.</text>
</comment>
<comment type="tissue specificity">
    <text evidence="6">Expressed in the animal hemisphere at the 4-cell stage. By stage 18, expressed in cells adjacent to the anterior neural plate. In late neurula, expressed in the cranial neural crest. At tail bud stages, expressed strongly in the head, ventral to the developing eye, branchial arches and lateral line placodes. Also localized in the otic vesicle, dorsal fin and notochord with weaker expression at intersomitic junctions of tail bud embryos.</text>
</comment>
<comment type="developmental stage">
    <text evidence="6">Expressed maternally. Expression levels decline during the cleavage stages with only weak expression by gastrula stages. Levels then increase at neurula stages and are high in tail bud embryos.</text>
</comment>
<comment type="domain">
    <text evidence="1">The N-terminal and the C-terminal halves of the protein can associate with each other, thereby hindering interactions with other proteins.</text>
</comment>
<comment type="similarity">
    <text evidence="7">Belongs to the prickle / espinas / testin family.</text>
</comment>
<organism>
    <name type="scientific">Xenopus laevis</name>
    <name type="common">African clawed frog</name>
    <dbReference type="NCBI Taxonomy" id="8355"/>
    <lineage>
        <taxon>Eukaryota</taxon>
        <taxon>Metazoa</taxon>
        <taxon>Chordata</taxon>
        <taxon>Craniata</taxon>
        <taxon>Vertebrata</taxon>
        <taxon>Euteleostomi</taxon>
        <taxon>Amphibia</taxon>
        <taxon>Batrachia</taxon>
        <taxon>Anura</taxon>
        <taxon>Pipoidea</taxon>
        <taxon>Pipidae</taxon>
        <taxon>Xenopodinae</taxon>
        <taxon>Xenopus</taxon>
        <taxon>Xenopus</taxon>
    </lineage>
</organism>